<dbReference type="SMR" id="P0DUW6"/>
<dbReference type="GO" id="GO:0005576">
    <property type="term" value="C:extracellular region"/>
    <property type="evidence" value="ECO:0007669"/>
    <property type="project" value="UniProtKB-SubCell"/>
</dbReference>
<dbReference type="GO" id="GO:0016020">
    <property type="term" value="C:membrane"/>
    <property type="evidence" value="ECO:0007669"/>
    <property type="project" value="UniProtKB-KW"/>
</dbReference>
<dbReference type="GO" id="GO:0042151">
    <property type="term" value="C:nematocyst"/>
    <property type="evidence" value="ECO:0007669"/>
    <property type="project" value="UniProtKB-SubCell"/>
</dbReference>
<dbReference type="GO" id="GO:0044218">
    <property type="term" value="C:other organism cell membrane"/>
    <property type="evidence" value="ECO:0007669"/>
    <property type="project" value="UniProtKB-KW"/>
</dbReference>
<dbReference type="GO" id="GO:0090729">
    <property type="term" value="F:toxin activity"/>
    <property type="evidence" value="ECO:0007669"/>
    <property type="project" value="UniProtKB-KW"/>
</dbReference>
<dbReference type="GO" id="GO:0031640">
    <property type="term" value="P:killing of cells of another organism"/>
    <property type="evidence" value="ECO:0007669"/>
    <property type="project" value="UniProtKB-KW"/>
</dbReference>
<dbReference type="GO" id="GO:0006811">
    <property type="term" value="P:monoatomic ion transport"/>
    <property type="evidence" value="ECO:0007669"/>
    <property type="project" value="UniProtKB-KW"/>
</dbReference>
<comment type="function">
    <text evidence="1">Has potent hemolytic activity. Is lethal to crayfish. Causes cutaneous inflammation in humans. May act as a pore-forming toxin, disrupting normal transmembrane ion concentration gradients in susceptible cells.</text>
</comment>
<comment type="subcellular location">
    <subcellularLocation>
        <location evidence="3">Secreted</location>
    </subcellularLocation>
    <subcellularLocation>
        <location evidence="3">Nematocyst</location>
    </subcellularLocation>
    <subcellularLocation>
        <location>Target cell membrane</location>
    </subcellularLocation>
    <text evidence="5">Forms a membrane channel in the prey.</text>
</comment>
<comment type="tissue specificity">
    <text evidence="5">Nematocytes.</text>
</comment>
<comment type="PTM">
    <text evidence="5">Contains disulfide bonds.</text>
</comment>
<comment type="mass spectrometry"/>
<comment type="similarity">
    <text evidence="5">Belongs to the jellyfish toxin family.</text>
</comment>
<organism>
    <name type="scientific">Cyanea capillata</name>
    <name type="common">Lion's mane jellyfish</name>
    <name type="synonym">Cyanea arctica</name>
    <dbReference type="NCBI Taxonomy" id="27804"/>
    <lineage>
        <taxon>Eukaryota</taxon>
        <taxon>Metazoa</taxon>
        <taxon>Cnidaria</taxon>
        <taxon>Scyphozoa</taxon>
        <taxon>Semaeostomeae</taxon>
        <taxon>Cyaneidae</taxon>
        <taxon>Cyanea</taxon>
    </lineage>
</organism>
<feature type="chain" id="PRO_0000453744" description="Toxin CcTX-1" evidence="3">
    <location>
        <begin position="1" status="less than"/>
        <end position="243"/>
    </location>
</feature>
<feature type="region of interest" description="Disordered" evidence="2">
    <location>
        <begin position="1"/>
        <end position="48"/>
    </location>
</feature>
<feature type="compositionally biased region" description="Basic and acidic residues" evidence="2">
    <location>
        <begin position="1"/>
        <end position="25"/>
    </location>
</feature>
<feature type="non-consecutive residues" evidence="6">
    <location>
        <begin position="24"/>
        <end position="25"/>
    </location>
</feature>
<feature type="non-consecutive residues" evidence="6">
    <location>
        <begin position="43"/>
        <end position="44"/>
    </location>
</feature>
<feature type="non-consecutive residues" evidence="6">
    <location>
        <begin position="63"/>
        <end position="64"/>
    </location>
</feature>
<feature type="non-consecutive residues" evidence="6">
    <location>
        <begin position="81"/>
        <end position="82"/>
    </location>
</feature>
<feature type="non-consecutive residues" evidence="6">
    <location>
        <begin position="99"/>
        <end position="100"/>
    </location>
</feature>
<feature type="non-consecutive residues" evidence="6">
    <location>
        <begin position="116"/>
        <end position="117"/>
    </location>
</feature>
<feature type="non-consecutive residues" evidence="6">
    <location>
        <begin position="126"/>
        <end position="127"/>
    </location>
</feature>
<feature type="non-consecutive residues" evidence="6">
    <location>
        <begin position="148"/>
        <end position="149"/>
    </location>
</feature>
<feature type="non-consecutive residues" evidence="6">
    <location>
        <begin position="163"/>
        <end position="164"/>
    </location>
</feature>
<feature type="non-consecutive residues" evidence="6">
    <location>
        <begin position="192"/>
        <end position="193"/>
    </location>
</feature>
<feature type="non-consecutive residues" evidence="6">
    <location>
        <begin position="213"/>
        <end position="214"/>
    </location>
</feature>
<feature type="non-consecutive residues" evidence="6">
    <location>
        <begin position="230"/>
        <end position="231"/>
    </location>
</feature>
<feature type="non-terminal residue" evidence="6">
    <location>
        <position position="1"/>
    </location>
</feature>
<proteinExistence type="evidence at protein level"/>
<sequence>SSPEKKNDMSKPGRMRFDNKKEPRSSAKNSGNGYGCVDVNAGREPLTGPGKYPSSFLLLLEHRKPPDKDRDRWDNVKGCERKDGKSHWYDSMLKHRSPREKTLVGSGKDSTNFVYRLLTEPLLNERAGCKVVDMWYSLSYWMDVVNKRFGLCHYLGSMMDHGRWNDYSLCKDSYAGKHKPAGGPPTPRLKNREECKFYWCWSGSEERAGGMGREYVMHSGGLYGDLTDKRDDPEPNGNLEGGV</sequence>
<keyword id="KW-0204">Cytolysis</keyword>
<keyword id="KW-0903">Direct protein sequencing</keyword>
<keyword id="KW-1015">Disulfide bond</keyword>
<keyword id="KW-0354">Hemolysis</keyword>
<keyword id="KW-0406">Ion transport</keyword>
<keyword id="KW-0472">Membrane</keyword>
<keyword id="KW-0166">Nematocyst</keyword>
<keyword id="KW-0964">Secreted</keyword>
<keyword id="KW-1052">Target cell membrane</keyword>
<keyword id="KW-1053">Target membrane</keyword>
<keyword id="KW-0800">Toxin</keyword>
<keyword id="KW-0812">Transmembrane</keyword>
<keyword id="KW-0813">Transport</keyword>
<protein>
    <recommendedName>
        <fullName evidence="4">Toxin CcTX-1</fullName>
    </recommendedName>
</protein>
<name>JTXU1_CYACP</name>
<reference key="1">
    <citation type="journal article" date="2011" name="Toxicon">
        <title>A novel proteinaceous cytotoxin from the northern Scyphozoa Cyanea capillata (L.) with structural homology to cubozoan haemolysins.</title>
        <authorList>
            <person name="Lassen S."/>
            <person name="Helmholz H."/>
            <person name="Ruhnau C."/>
            <person name="Prange A."/>
        </authorList>
    </citation>
    <scope>PROTEIN SEQUENCE</scope>
    <scope>FUNCTION</scope>
    <scope>SUBCELLULAR LOCATION</scope>
    <scope>MASS SPECTROMETRY</scope>
    <source>
        <tissue>Nematoblast</tissue>
        <tissue>Tentacle</tissue>
    </source>
</reference>
<evidence type="ECO:0000250" key="1">
    <source>
        <dbReference type="UniProtKB" id="Q9GNN8"/>
    </source>
</evidence>
<evidence type="ECO:0000256" key="2">
    <source>
        <dbReference type="SAM" id="MobiDB-lite"/>
    </source>
</evidence>
<evidence type="ECO:0000269" key="3">
    <source>
    </source>
</evidence>
<evidence type="ECO:0000303" key="4">
    <source>
    </source>
</evidence>
<evidence type="ECO:0000305" key="5"/>
<evidence type="ECO:0000305" key="6">
    <source>
    </source>
</evidence>
<accession>P0DUW6</accession>